<reference key="1">
    <citation type="submission" date="2007-02" db="EMBL/GenBank/DDBJ databases">
        <title>Complete sequence of chromosome 1 of Rhodobacter sphaeroides ATCC 17029.</title>
        <authorList>
            <person name="Copeland A."/>
            <person name="Lucas S."/>
            <person name="Lapidus A."/>
            <person name="Barry K."/>
            <person name="Detter J.C."/>
            <person name="Glavina del Rio T."/>
            <person name="Hammon N."/>
            <person name="Israni S."/>
            <person name="Dalin E."/>
            <person name="Tice H."/>
            <person name="Pitluck S."/>
            <person name="Kiss H."/>
            <person name="Brettin T."/>
            <person name="Bruce D."/>
            <person name="Han C."/>
            <person name="Tapia R."/>
            <person name="Gilna P."/>
            <person name="Schmutz J."/>
            <person name="Larimer F."/>
            <person name="Land M."/>
            <person name="Hauser L."/>
            <person name="Kyrpides N."/>
            <person name="Mikhailova N."/>
            <person name="Richardson P."/>
            <person name="Mackenzie C."/>
            <person name="Choudhary M."/>
            <person name="Donohue T.J."/>
            <person name="Kaplan S."/>
        </authorList>
    </citation>
    <scope>NUCLEOTIDE SEQUENCE [LARGE SCALE GENOMIC DNA]</scope>
    <source>
        <strain>ATCC 17029 / ATH 2.4.9</strain>
    </source>
</reference>
<evidence type="ECO:0000255" key="1">
    <source>
        <dbReference type="HAMAP-Rule" id="MF_00361"/>
    </source>
</evidence>
<gene>
    <name evidence="1" type="primary">nadK</name>
    <name type="ordered locus">Rsph17029_2482</name>
</gene>
<organism>
    <name type="scientific">Cereibacter sphaeroides (strain ATCC 17029 / ATH 2.4.9)</name>
    <name type="common">Rhodobacter sphaeroides</name>
    <dbReference type="NCBI Taxonomy" id="349101"/>
    <lineage>
        <taxon>Bacteria</taxon>
        <taxon>Pseudomonadati</taxon>
        <taxon>Pseudomonadota</taxon>
        <taxon>Alphaproteobacteria</taxon>
        <taxon>Rhodobacterales</taxon>
        <taxon>Paracoccaceae</taxon>
        <taxon>Cereibacter</taxon>
    </lineage>
</organism>
<name>NADK_CERS1</name>
<accession>A3PML8</accession>
<proteinExistence type="inferred from homology"/>
<keyword id="KW-0067">ATP-binding</keyword>
<keyword id="KW-0963">Cytoplasm</keyword>
<keyword id="KW-0418">Kinase</keyword>
<keyword id="KW-0520">NAD</keyword>
<keyword id="KW-0521">NADP</keyword>
<keyword id="KW-0547">Nucleotide-binding</keyword>
<keyword id="KW-0808">Transferase</keyword>
<feature type="chain" id="PRO_1000005434" description="NAD kinase">
    <location>
        <begin position="1"/>
        <end position="254"/>
    </location>
</feature>
<feature type="active site" description="Proton acceptor" evidence="1">
    <location>
        <position position="44"/>
    </location>
</feature>
<feature type="binding site" evidence="1">
    <location>
        <begin position="44"/>
        <end position="45"/>
    </location>
    <ligand>
        <name>NAD(+)</name>
        <dbReference type="ChEBI" id="CHEBI:57540"/>
    </ligand>
</feature>
<feature type="binding site" evidence="1">
    <location>
        <begin position="114"/>
        <end position="115"/>
    </location>
    <ligand>
        <name>NAD(+)</name>
        <dbReference type="ChEBI" id="CHEBI:57540"/>
    </ligand>
</feature>
<feature type="binding site" evidence="1">
    <location>
        <position position="144"/>
    </location>
    <ligand>
        <name>NAD(+)</name>
        <dbReference type="ChEBI" id="CHEBI:57540"/>
    </ligand>
</feature>
<feature type="binding site" evidence="1">
    <location>
        <position position="152"/>
    </location>
    <ligand>
        <name>NAD(+)</name>
        <dbReference type="ChEBI" id="CHEBI:57540"/>
    </ligand>
</feature>
<feature type="binding site" evidence="1">
    <location>
        <begin position="155"/>
        <end position="160"/>
    </location>
    <ligand>
        <name>NAD(+)</name>
        <dbReference type="ChEBI" id="CHEBI:57540"/>
    </ligand>
</feature>
<feature type="binding site" evidence="1">
    <location>
        <position position="179"/>
    </location>
    <ligand>
        <name>NAD(+)</name>
        <dbReference type="ChEBI" id="CHEBI:57540"/>
    </ligand>
</feature>
<protein>
    <recommendedName>
        <fullName evidence="1">NAD kinase</fullName>
        <ecNumber evidence="1">2.7.1.23</ecNumber>
    </recommendedName>
    <alternativeName>
        <fullName evidence="1">ATP-dependent NAD kinase</fullName>
    </alternativeName>
</protein>
<dbReference type="EC" id="2.7.1.23" evidence="1"/>
<dbReference type="EMBL" id="CP000577">
    <property type="protein sequence ID" value="ABN77584.1"/>
    <property type="molecule type" value="Genomic_DNA"/>
</dbReference>
<dbReference type="RefSeq" id="WP_002721011.1">
    <property type="nucleotide sequence ID" value="NC_009049.1"/>
</dbReference>
<dbReference type="SMR" id="A3PML8"/>
<dbReference type="KEGG" id="rsh:Rsph17029_2482"/>
<dbReference type="HOGENOM" id="CLU_073319_0_0_5"/>
<dbReference type="GO" id="GO:0005737">
    <property type="term" value="C:cytoplasm"/>
    <property type="evidence" value="ECO:0007669"/>
    <property type="project" value="UniProtKB-SubCell"/>
</dbReference>
<dbReference type="GO" id="GO:0005524">
    <property type="term" value="F:ATP binding"/>
    <property type="evidence" value="ECO:0007669"/>
    <property type="project" value="UniProtKB-KW"/>
</dbReference>
<dbReference type="GO" id="GO:0046872">
    <property type="term" value="F:metal ion binding"/>
    <property type="evidence" value="ECO:0007669"/>
    <property type="project" value="UniProtKB-UniRule"/>
</dbReference>
<dbReference type="GO" id="GO:0051287">
    <property type="term" value="F:NAD binding"/>
    <property type="evidence" value="ECO:0007669"/>
    <property type="project" value="UniProtKB-ARBA"/>
</dbReference>
<dbReference type="GO" id="GO:0003951">
    <property type="term" value="F:NAD+ kinase activity"/>
    <property type="evidence" value="ECO:0007669"/>
    <property type="project" value="UniProtKB-UniRule"/>
</dbReference>
<dbReference type="GO" id="GO:0019674">
    <property type="term" value="P:NAD metabolic process"/>
    <property type="evidence" value="ECO:0007669"/>
    <property type="project" value="InterPro"/>
</dbReference>
<dbReference type="GO" id="GO:0006741">
    <property type="term" value="P:NADP biosynthetic process"/>
    <property type="evidence" value="ECO:0007669"/>
    <property type="project" value="UniProtKB-UniRule"/>
</dbReference>
<dbReference type="Gene3D" id="3.40.50.10330">
    <property type="entry name" value="Probable inorganic polyphosphate/atp-NAD kinase, domain 1"/>
    <property type="match status" value="1"/>
</dbReference>
<dbReference type="Gene3D" id="2.60.200.30">
    <property type="entry name" value="Probable inorganic polyphosphate/atp-NAD kinase, domain 2"/>
    <property type="match status" value="1"/>
</dbReference>
<dbReference type="HAMAP" id="MF_00361">
    <property type="entry name" value="NAD_kinase"/>
    <property type="match status" value="1"/>
</dbReference>
<dbReference type="InterPro" id="IPR017438">
    <property type="entry name" value="ATP-NAD_kinase_N"/>
</dbReference>
<dbReference type="InterPro" id="IPR017437">
    <property type="entry name" value="ATP-NAD_kinase_PpnK-typ_C"/>
</dbReference>
<dbReference type="InterPro" id="IPR016064">
    <property type="entry name" value="NAD/diacylglycerol_kinase_sf"/>
</dbReference>
<dbReference type="InterPro" id="IPR002504">
    <property type="entry name" value="NADK"/>
</dbReference>
<dbReference type="NCBIfam" id="NF003406">
    <property type="entry name" value="PRK04761.1"/>
    <property type="match status" value="1"/>
</dbReference>
<dbReference type="PANTHER" id="PTHR20275">
    <property type="entry name" value="NAD KINASE"/>
    <property type="match status" value="1"/>
</dbReference>
<dbReference type="PANTHER" id="PTHR20275:SF0">
    <property type="entry name" value="NAD KINASE"/>
    <property type="match status" value="1"/>
</dbReference>
<dbReference type="Pfam" id="PF01513">
    <property type="entry name" value="NAD_kinase"/>
    <property type="match status" value="1"/>
</dbReference>
<dbReference type="Pfam" id="PF20143">
    <property type="entry name" value="NAD_kinase_C"/>
    <property type="match status" value="1"/>
</dbReference>
<dbReference type="SUPFAM" id="SSF111331">
    <property type="entry name" value="NAD kinase/diacylglycerol kinase-like"/>
    <property type="match status" value="1"/>
</dbReference>
<comment type="function">
    <text evidence="1">Involved in the regulation of the intracellular balance of NAD and NADP, and is a key enzyme in the biosynthesis of NADP. Catalyzes specifically the phosphorylation on 2'-hydroxyl of the adenosine moiety of NAD to yield NADP.</text>
</comment>
<comment type="catalytic activity">
    <reaction evidence="1">
        <text>NAD(+) + ATP = ADP + NADP(+) + H(+)</text>
        <dbReference type="Rhea" id="RHEA:18629"/>
        <dbReference type="ChEBI" id="CHEBI:15378"/>
        <dbReference type="ChEBI" id="CHEBI:30616"/>
        <dbReference type="ChEBI" id="CHEBI:57540"/>
        <dbReference type="ChEBI" id="CHEBI:58349"/>
        <dbReference type="ChEBI" id="CHEBI:456216"/>
        <dbReference type="EC" id="2.7.1.23"/>
    </reaction>
</comment>
<comment type="cofactor">
    <cofactor evidence="1">
        <name>a divalent metal cation</name>
        <dbReference type="ChEBI" id="CHEBI:60240"/>
    </cofactor>
</comment>
<comment type="subcellular location">
    <subcellularLocation>
        <location evidence="1">Cytoplasm</location>
    </subcellularLocation>
</comment>
<comment type="similarity">
    <text evidence="1">Belongs to the NAD kinase family.</text>
</comment>
<sequence>MTPQRIGFVASSAPVAQEALNVMAARYGQCPLPEADAIVALGGDGFMLQTLHETQSLDIPVYGMNRGTVGFLMNGYAEDGLRERLAEAEEEILNPLAMTAVTGAGEVFHRIAINEVSLLRAGPQAAWLKISVDGKVRMEELVCDGALVCTPAGSTAYNYSAHGPILPIGADVLALTAIAPFRPRRWRGALLPKTALVRFDVIDAQKRPVMADADGRSVRDVVSVEIRTEPAVRHRLLFDPGHGLEERLIREQFV</sequence>